<dbReference type="EMBL" id="U94586">
    <property type="protein sequence ID" value="AAB52726.1"/>
    <property type="molecule type" value="mRNA"/>
</dbReference>
<dbReference type="EMBL" id="AF201077">
    <property type="protein sequence ID" value="AAF09253.1"/>
    <property type="molecule type" value="mRNA"/>
</dbReference>
<dbReference type="EMBL" id="CR407618">
    <property type="protein sequence ID" value="CAG28546.1"/>
    <property type="molecule type" value="mRNA"/>
</dbReference>
<dbReference type="EMBL" id="CR541716">
    <property type="protein sequence ID" value="CAG46517.1"/>
    <property type="molecule type" value="mRNA"/>
</dbReference>
<dbReference type="EMBL" id="CH236948">
    <property type="protein sequence ID" value="EAL24297.1"/>
    <property type="molecule type" value="Genomic_DNA"/>
</dbReference>
<dbReference type="EMBL" id="CH471073">
    <property type="protein sequence ID" value="EAW93631.1"/>
    <property type="molecule type" value="Genomic_DNA"/>
</dbReference>
<dbReference type="EMBL" id="BC105295">
    <property type="protein sequence ID" value="AAI05296.1"/>
    <property type="molecule type" value="mRNA"/>
</dbReference>
<dbReference type="EMBL" id="BC101794">
    <property type="protein sequence ID" value="AAI01795.1"/>
    <property type="molecule type" value="mRNA"/>
</dbReference>
<dbReference type="EMBL" id="BC101796">
    <property type="protein sequence ID" value="AAI01797.1"/>
    <property type="molecule type" value="mRNA"/>
</dbReference>
<dbReference type="CCDS" id="CCDS5357.1"/>
<dbReference type="RefSeq" id="NP_002480.1">
    <property type="nucleotide sequence ID" value="NM_002489.4"/>
</dbReference>
<dbReference type="PDB" id="5Z62">
    <property type="method" value="EM"/>
    <property type="resolution" value="3.60 A"/>
    <property type="chains" value="N=3-81"/>
</dbReference>
<dbReference type="PDBsum" id="5Z62"/>
<dbReference type="SMR" id="O00483"/>
<dbReference type="BioGRID" id="110777">
    <property type="interactions" value="339"/>
</dbReference>
<dbReference type="ComplexPortal" id="CPX-6123">
    <property type="entry name" value="Mitochondrial respiratory chain complex IV"/>
</dbReference>
<dbReference type="CORUM" id="O00483"/>
<dbReference type="FunCoup" id="O00483">
    <property type="interactions" value="861"/>
</dbReference>
<dbReference type="IntAct" id="O00483">
    <property type="interactions" value="308"/>
</dbReference>
<dbReference type="MINT" id="O00483"/>
<dbReference type="STRING" id="9606.ENSP00000339720"/>
<dbReference type="BindingDB" id="O00483"/>
<dbReference type="ChEMBL" id="CHEMBL2317"/>
<dbReference type="DrugBank" id="DB00157">
    <property type="generic name" value="NADH"/>
</dbReference>
<dbReference type="DrugCentral" id="O00483"/>
<dbReference type="GlyGen" id="O00483">
    <property type="glycosylation" value="1 site, 1 O-linked glycan (1 site)"/>
</dbReference>
<dbReference type="iPTMnet" id="O00483"/>
<dbReference type="PhosphoSitePlus" id="O00483"/>
<dbReference type="SwissPalm" id="O00483"/>
<dbReference type="BioMuta" id="NDUFA4"/>
<dbReference type="jPOST" id="O00483"/>
<dbReference type="MassIVE" id="O00483"/>
<dbReference type="PaxDb" id="9606-ENSP00000339720"/>
<dbReference type="PeptideAtlas" id="O00483"/>
<dbReference type="ProteomicsDB" id="47931"/>
<dbReference type="Pumba" id="O00483"/>
<dbReference type="TopDownProteomics" id="O00483"/>
<dbReference type="Antibodypedia" id="56007">
    <property type="antibodies" value="144 antibodies from 29 providers"/>
</dbReference>
<dbReference type="DNASU" id="4697"/>
<dbReference type="Ensembl" id="ENST00000339600.6">
    <property type="protein sequence ID" value="ENSP00000339720.5"/>
    <property type="gene ID" value="ENSG00000189043.10"/>
</dbReference>
<dbReference type="GeneID" id="4697"/>
<dbReference type="KEGG" id="hsa:4697"/>
<dbReference type="MANE-Select" id="ENST00000339600.6">
    <property type="protein sequence ID" value="ENSP00000339720.5"/>
    <property type="RefSeq nucleotide sequence ID" value="NM_002489.4"/>
    <property type="RefSeq protein sequence ID" value="NP_002480.1"/>
</dbReference>
<dbReference type="UCSC" id="uc003srx.3">
    <property type="organism name" value="human"/>
</dbReference>
<dbReference type="AGR" id="HGNC:7687"/>
<dbReference type="CTD" id="4697"/>
<dbReference type="DisGeNET" id="4697"/>
<dbReference type="GeneCards" id="NDUFA4"/>
<dbReference type="HGNC" id="HGNC:7687">
    <property type="gene designation" value="NDUFA4"/>
</dbReference>
<dbReference type="HPA" id="ENSG00000189043">
    <property type="expression patterns" value="Tissue enhanced (tongue)"/>
</dbReference>
<dbReference type="MalaCards" id="NDUFA4"/>
<dbReference type="MIM" id="603833">
    <property type="type" value="gene"/>
</dbReference>
<dbReference type="MIM" id="619065">
    <property type="type" value="phenotype"/>
</dbReference>
<dbReference type="neXtProt" id="NX_O00483"/>
<dbReference type="OpenTargets" id="ENSG00000189043"/>
<dbReference type="PharmGKB" id="PA31493"/>
<dbReference type="VEuPathDB" id="HostDB:ENSG00000189043"/>
<dbReference type="eggNOG" id="ENOG502S65P">
    <property type="taxonomic scope" value="Eukaryota"/>
</dbReference>
<dbReference type="GeneTree" id="ENSGT00940000154268"/>
<dbReference type="HOGENOM" id="CLU_181002_0_0_1"/>
<dbReference type="InParanoid" id="O00483"/>
<dbReference type="OMA" id="PWNKMSP"/>
<dbReference type="OrthoDB" id="5511684at2759"/>
<dbReference type="PAN-GO" id="O00483">
    <property type="GO annotations" value="1 GO annotation based on evolutionary models"/>
</dbReference>
<dbReference type="PhylomeDB" id="O00483"/>
<dbReference type="TreeFam" id="TF106383"/>
<dbReference type="BioCyc" id="MetaCyc:HS08711-MONOMER"/>
<dbReference type="PathwayCommons" id="O00483"/>
<dbReference type="Reactome" id="R-HSA-5628897">
    <property type="pathway name" value="TP53 Regulates Metabolic Genes"/>
</dbReference>
<dbReference type="Reactome" id="R-HSA-611105">
    <property type="pathway name" value="Respiratory electron transport"/>
</dbReference>
<dbReference type="Reactome" id="R-HSA-9707564">
    <property type="pathway name" value="Cytoprotection by HMOX1"/>
</dbReference>
<dbReference type="Reactome" id="R-HSA-9864848">
    <property type="pathway name" value="Complex IV assembly"/>
</dbReference>
<dbReference type="SignaLink" id="O00483"/>
<dbReference type="SIGNOR" id="O00483"/>
<dbReference type="BioGRID-ORCS" id="4697">
    <property type="hits" value="265 hits in 1095 CRISPR screens"/>
</dbReference>
<dbReference type="CD-CODE" id="FB4E32DD">
    <property type="entry name" value="Presynaptic clusters and postsynaptic densities"/>
</dbReference>
<dbReference type="ChiTaRS" id="NDUFA4">
    <property type="organism name" value="human"/>
</dbReference>
<dbReference type="GenomeRNAi" id="4697"/>
<dbReference type="Pharos" id="O00483">
    <property type="development level" value="Tclin"/>
</dbReference>
<dbReference type="PRO" id="PR:O00483"/>
<dbReference type="Proteomes" id="UP000005640">
    <property type="component" value="Chromosome 7"/>
</dbReference>
<dbReference type="RNAct" id="O00483">
    <property type="molecule type" value="protein"/>
</dbReference>
<dbReference type="Bgee" id="ENSG00000189043">
    <property type="expression patterns" value="Expressed in heart right ventricle and 209 other cell types or tissues"/>
</dbReference>
<dbReference type="ExpressionAtlas" id="O00483">
    <property type="expression patterns" value="baseline and differential"/>
</dbReference>
<dbReference type="GO" id="GO:0005743">
    <property type="term" value="C:mitochondrial inner membrane"/>
    <property type="evidence" value="ECO:0000304"/>
    <property type="project" value="Reactome"/>
</dbReference>
<dbReference type="GO" id="GO:0031966">
    <property type="term" value="C:mitochondrial membrane"/>
    <property type="evidence" value="ECO:0000314"/>
    <property type="project" value="ComplexPortal"/>
</dbReference>
<dbReference type="GO" id="GO:0005739">
    <property type="term" value="C:mitochondrion"/>
    <property type="evidence" value="ECO:0000314"/>
    <property type="project" value="MGI"/>
</dbReference>
<dbReference type="GO" id="GO:0045271">
    <property type="term" value="C:respiratory chain complex I"/>
    <property type="evidence" value="ECO:0007669"/>
    <property type="project" value="Ensembl"/>
</dbReference>
<dbReference type="GO" id="GO:0045277">
    <property type="term" value="C:respiratory chain complex IV"/>
    <property type="evidence" value="ECO:0000314"/>
    <property type="project" value="UniProtKB"/>
</dbReference>
<dbReference type="GO" id="GO:0008137">
    <property type="term" value="F:NADH dehydrogenase (ubiquinone) activity"/>
    <property type="evidence" value="ECO:0000304"/>
    <property type="project" value="ProtInc"/>
</dbReference>
<dbReference type="GO" id="GO:0044877">
    <property type="term" value="F:protein-containing complex binding"/>
    <property type="evidence" value="ECO:0000314"/>
    <property type="project" value="MGI"/>
</dbReference>
<dbReference type="GO" id="GO:0045333">
    <property type="term" value="P:cellular respiration"/>
    <property type="evidence" value="ECO:0000303"/>
    <property type="project" value="ComplexPortal"/>
</dbReference>
<dbReference type="GO" id="GO:0006123">
    <property type="term" value="P:mitochondrial electron transport, cytochrome c to oxygen"/>
    <property type="evidence" value="ECO:0000303"/>
    <property type="project" value="ComplexPortal"/>
</dbReference>
<dbReference type="GO" id="GO:0006120">
    <property type="term" value="P:mitochondrial electron transport, NADH to ubiquinone"/>
    <property type="evidence" value="ECO:0000303"/>
    <property type="project" value="UniProtKB"/>
</dbReference>
<dbReference type="InterPro" id="IPR010530">
    <property type="entry name" value="B12D"/>
</dbReference>
<dbReference type="PANTHER" id="PTHR14256:SF4">
    <property type="entry name" value="CYTOCHROME C OXIDASE SUBUNIT NDUFA4"/>
    <property type="match status" value="1"/>
</dbReference>
<dbReference type="PANTHER" id="PTHR14256">
    <property type="entry name" value="NADH-UBIQUINONE OXIDOREDUCTASE MLRQ SUBUNIT"/>
    <property type="match status" value="1"/>
</dbReference>
<dbReference type="Pfam" id="PF06522">
    <property type="entry name" value="B12D"/>
    <property type="match status" value="1"/>
</dbReference>
<protein>
    <recommendedName>
        <fullName>Cytochrome c oxidase subunit NDUFA4</fullName>
    </recommendedName>
    <alternativeName>
        <fullName>Complex I-MLRQ</fullName>
        <shortName>CI-MLRQ</shortName>
    </alternativeName>
    <alternativeName>
        <fullName>NADH-ubiquinone oxidoreductase MLRQ subunit</fullName>
    </alternativeName>
</protein>
<name>NDUA4_HUMAN</name>
<sequence>MLRQIIGQAKKHPSLIPLFVFIGTGATGATLYLLRLALFNPDVCWDRNNPEPWNKLGPNDQYKFYSVNVDYSKLKKERPDF</sequence>
<keyword id="KW-0002">3D-structure</keyword>
<keyword id="KW-0007">Acetylation</keyword>
<keyword id="KW-0249">Electron transport</keyword>
<keyword id="KW-0431">Leigh syndrome</keyword>
<keyword id="KW-0472">Membrane</keyword>
<keyword id="KW-0496">Mitochondrion</keyword>
<keyword id="KW-0999">Mitochondrion inner membrane</keyword>
<keyword id="KW-0597">Phosphoprotein</keyword>
<keyword id="KW-1274">Primary mitochondrial disease</keyword>
<keyword id="KW-1267">Proteomics identification</keyword>
<keyword id="KW-1185">Reference proteome</keyword>
<keyword id="KW-0679">Respiratory chain</keyword>
<keyword id="KW-0812">Transmembrane</keyword>
<keyword id="KW-1133">Transmembrane helix</keyword>
<keyword id="KW-0813">Transport</keyword>
<accession>O00483</accession>
<accession>A4D109</accession>
<accession>Q6FHN5</accession>
<proteinExistence type="evidence at protein level"/>
<reference key="1">
    <citation type="journal article" date="1997" name="Biochem. Mol. Biol. Int.">
        <title>Cloning of the human cDNA sequence encoding the NADH:ubiquinone oxidoreductase MLRQ subunit.</title>
        <authorList>
            <person name="Kim J.W."/>
            <person name="Lee Y."/>
            <person name="Kang H.B."/>
            <person name="Chose Y.K."/>
            <person name="Chung T.W."/>
            <person name="Chang S.Y."/>
            <person name="Lee K.S."/>
            <person name="Choe I.S."/>
        </authorList>
    </citation>
    <scope>NUCLEOTIDE SEQUENCE [MRNA]</scope>
    <source>
        <tissue>Liver</tissue>
    </source>
</reference>
<reference key="2">
    <citation type="submission" date="1999-11" db="EMBL/GenBank/DDBJ databases">
        <title>Genomic sequence, cDNA sequence and chromosomal localization of the NDUFA4 human gene coding for the MLRQ subunit of NADH:ubiquinone oxidoreductase and its pseudogene.</title>
        <authorList>
            <person name="Kanagarajah D."/>
            <person name="Raha S."/>
            <person name="Scherer S."/>
            <person name="Robinson B.H."/>
        </authorList>
    </citation>
    <scope>NUCLEOTIDE SEQUENCE [MRNA]</scope>
</reference>
<reference key="3">
    <citation type="submission" date="2004-05" db="EMBL/GenBank/DDBJ databases">
        <title>Cloning of human full open reading frames in Gateway(TM) system entry vector (pDONR201).</title>
        <authorList>
            <person name="Ebert L."/>
            <person name="Schick M."/>
            <person name="Neubert P."/>
            <person name="Schatten R."/>
            <person name="Henze S."/>
            <person name="Korn B."/>
        </authorList>
    </citation>
    <scope>NUCLEOTIDE SEQUENCE [LARGE SCALE MRNA]</scope>
</reference>
<reference key="4">
    <citation type="submission" date="2004-06" db="EMBL/GenBank/DDBJ databases">
        <title>Cloning of human full open reading frames in Gateway(TM) system entry vector (pDONR201).</title>
        <authorList>
            <person name="Halleck A."/>
            <person name="Ebert L."/>
            <person name="Mkoundinya M."/>
            <person name="Schick M."/>
            <person name="Eisenstein S."/>
            <person name="Neubert P."/>
            <person name="Kstrang K."/>
            <person name="Schatten R."/>
            <person name="Shen B."/>
            <person name="Henze S."/>
            <person name="Mar W."/>
            <person name="Korn B."/>
            <person name="Zuo D."/>
            <person name="Hu Y."/>
            <person name="LaBaer J."/>
        </authorList>
    </citation>
    <scope>NUCLEOTIDE SEQUENCE [LARGE SCALE MRNA]</scope>
</reference>
<reference key="5">
    <citation type="journal article" date="2003" name="Science">
        <title>Human chromosome 7: DNA sequence and biology.</title>
        <authorList>
            <person name="Scherer S.W."/>
            <person name="Cheung J."/>
            <person name="MacDonald J.R."/>
            <person name="Osborne L.R."/>
            <person name="Nakabayashi K."/>
            <person name="Herbrick J.-A."/>
            <person name="Carson A.R."/>
            <person name="Parker-Katiraee L."/>
            <person name="Skaug J."/>
            <person name="Khaja R."/>
            <person name="Zhang J."/>
            <person name="Hudek A.K."/>
            <person name="Li M."/>
            <person name="Haddad M."/>
            <person name="Duggan G.E."/>
            <person name="Fernandez B.A."/>
            <person name="Kanematsu E."/>
            <person name="Gentles S."/>
            <person name="Christopoulos C.C."/>
            <person name="Choufani S."/>
            <person name="Kwasnicka D."/>
            <person name="Zheng X.H."/>
            <person name="Lai Z."/>
            <person name="Nusskern D.R."/>
            <person name="Zhang Q."/>
            <person name="Gu Z."/>
            <person name="Lu F."/>
            <person name="Zeesman S."/>
            <person name="Nowaczyk M.J."/>
            <person name="Teshima I."/>
            <person name="Chitayat D."/>
            <person name="Shuman C."/>
            <person name="Weksberg R."/>
            <person name="Zackai E.H."/>
            <person name="Grebe T.A."/>
            <person name="Cox S.R."/>
            <person name="Kirkpatrick S.J."/>
            <person name="Rahman N."/>
            <person name="Friedman J.M."/>
            <person name="Heng H.H.Q."/>
            <person name="Pelicci P.G."/>
            <person name="Lo-Coco F."/>
            <person name="Belloni E."/>
            <person name="Shaffer L.G."/>
            <person name="Pober B."/>
            <person name="Morton C.C."/>
            <person name="Gusella J.F."/>
            <person name="Bruns G.A.P."/>
            <person name="Korf B.R."/>
            <person name="Quade B.J."/>
            <person name="Ligon A.H."/>
            <person name="Ferguson H."/>
            <person name="Higgins A.W."/>
            <person name="Leach N.T."/>
            <person name="Herrick S.R."/>
            <person name="Lemyre E."/>
            <person name="Farra C.G."/>
            <person name="Kim H.-G."/>
            <person name="Summers A.M."/>
            <person name="Gripp K.W."/>
            <person name="Roberts W."/>
            <person name="Szatmari P."/>
            <person name="Winsor E.J.T."/>
            <person name="Grzeschik K.-H."/>
            <person name="Teebi A."/>
            <person name="Minassian B.A."/>
            <person name="Kere J."/>
            <person name="Armengol L."/>
            <person name="Pujana M.A."/>
            <person name="Estivill X."/>
            <person name="Wilson M.D."/>
            <person name="Koop B.F."/>
            <person name="Tosi S."/>
            <person name="Moore G.E."/>
            <person name="Boright A.P."/>
            <person name="Zlotorynski E."/>
            <person name="Kerem B."/>
            <person name="Kroisel P.M."/>
            <person name="Petek E."/>
            <person name="Oscier D.G."/>
            <person name="Mould S.J."/>
            <person name="Doehner H."/>
            <person name="Doehner K."/>
            <person name="Rommens J.M."/>
            <person name="Vincent J.B."/>
            <person name="Venter J.C."/>
            <person name="Li P.W."/>
            <person name="Mural R.J."/>
            <person name="Adams M.D."/>
            <person name="Tsui L.-C."/>
        </authorList>
    </citation>
    <scope>NUCLEOTIDE SEQUENCE [LARGE SCALE GENOMIC DNA]</scope>
</reference>
<reference key="6">
    <citation type="submission" date="2005-07" db="EMBL/GenBank/DDBJ databases">
        <authorList>
            <person name="Mural R.J."/>
            <person name="Istrail S."/>
            <person name="Sutton G.G."/>
            <person name="Florea L."/>
            <person name="Halpern A.L."/>
            <person name="Mobarry C.M."/>
            <person name="Lippert R."/>
            <person name="Walenz B."/>
            <person name="Shatkay H."/>
            <person name="Dew I."/>
            <person name="Miller J.R."/>
            <person name="Flanigan M.J."/>
            <person name="Edwards N.J."/>
            <person name="Bolanos R."/>
            <person name="Fasulo D."/>
            <person name="Halldorsson B.V."/>
            <person name="Hannenhalli S."/>
            <person name="Turner R."/>
            <person name="Yooseph S."/>
            <person name="Lu F."/>
            <person name="Nusskern D.R."/>
            <person name="Shue B.C."/>
            <person name="Zheng X.H."/>
            <person name="Zhong F."/>
            <person name="Delcher A.L."/>
            <person name="Huson D.H."/>
            <person name="Kravitz S.A."/>
            <person name="Mouchard L."/>
            <person name="Reinert K."/>
            <person name="Remington K.A."/>
            <person name="Clark A.G."/>
            <person name="Waterman M.S."/>
            <person name="Eichler E.E."/>
            <person name="Adams M.D."/>
            <person name="Hunkapiller M.W."/>
            <person name="Myers E.W."/>
            <person name="Venter J.C."/>
        </authorList>
    </citation>
    <scope>NUCLEOTIDE SEQUENCE [LARGE SCALE GENOMIC DNA]</scope>
</reference>
<reference key="7">
    <citation type="journal article" date="2004" name="Genome Res.">
        <title>The status, quality, and expansion of the NIH full-length cDNA project: the Mammalian Gene Collection (MGC).</title>
        <authorList>
            <consortium name="The MGC Project Team"/>
        </authorList>
    </citation>
    <scope>NUCLEOTIDE SEQUENCE [LARGE SCALE MRNA]</scope>
    <source>
        <tissue>Brain</tissue>
    </source>
</reference>
<reference key="8">
    <citation type="journal article" date="2003" name="J. Biol. Chem.">
        <title>The subunit composition of the human NADH dehydrogenase obtained by rapid one-step immunopurification.</title>
        <authorList>
            <person name="Murray J."/>
            <person name="Zhang B."/>
            <person name="Taylor S.W."/>
            <person name="Oglesbee D."/>
            <person name="Fahy E."/>
            <person name="Marusich M.F."/>
            <person name="Ghosh S.S."/>
            <person name="Capaldi R.A."/>
        </authorList>
    </citation>
    <scope>INITIAL IDENTIFICATION IN THE NADH-UBIQUINONE OXIDOREDUCTASE COMPLEX</scope>
    <scope>IDENTIFICATION BY MASS SPECTROMETRY</scope>
</reference>
<reference key="9">
    <citation type="journal article" date="2011" name="BMC Syst. Biol.">
        <title>Initial characterization of the human central proteome.</title>
        <authorList>
            <person name="Burkard T.R."/>
            <person name="Planyavsky M."/>
            <person name="Kaupe I."/>
            <person name="Breitwieser F.P."/>
            <person name="Buerckstuemmer T."/>
            <person name="Bennett K.L."/>
            <person name="Superti-Furga G."/>
            <person name="Colinge J."/>
        </authorList>
    </citation>
    <scope>IDENTIFICATION BY MASS SPECTROMETRY [LARGE SCALE ANALYSIS]</scope>
</reference>
<reference key="10">
    <citation type="journal article" date="2012" name="Cell Metab.">
        <title>NDUFA4 is a subunit of complex IV of the mammalian electron transport chain.</title>
        <authorList>
            <person name="Balsa E."/>
            <person name="Marco R."/>
            <person name="Perales-Clemente E."/>
            <person name="Szklarczyk R."/>
            <person name="Calvo E."/>
            <person name="Landazuri M.O."/>
            <person name="Enriquez J.A."/>
        </authorList>
    </citation>
    <scope>FUNCTION</scope>
    <scope>IDENTIFICATION AS CYTOCHROME C OXIDASE SUBUNIT</scope>
</reference>
<reference key="11">
    <citation type="journal article" date="2013" name="Cell Rep.">
        <title>NDUFA4 mutations underlie dysfunction of a cytochrome c oxidase subunit linked to human neurological disease.</title>
        <authorList>
            <person name="Pitceathly R.D."/>
            <person name="Rahman S."/>
            <person name="Wedatilake Y."/>
            <person name="Polke J.M."/>
            <person name="Cirak S."/>
            <person name="Foley A.R."/>
            <person name="Sailer A."/>
            <person name="Hurles M.E."/>
            <person name="Stalker J."/>
            <person name="Hargreaves I."/>
            <person name="Woodward C.E."/>
            <person name="Sweeney M.G."/>
            <person name="Muntoni F."/>
            <person name="Houlden H."/>
            <person name="Taanman J.W."/>
            <person name="Hanna M.G."/>
        </authorList>
    </citation>
    <scope>SUBUNIT</scope>
    <scope>SUBCELLULAR LOCATION</scope>
    <scope>INVOLVEMENT IN MC4DN21</scope>
</reference>
<reference key="12">
    <citation type="journal article" date="2013" name="J. Proteome Res.">
        <title>Toward a comprehensive characterization of a human cancer cell phosphoproteome.</title>
        <authorList>
            <person name="Zhou H."/>
            <person name="Di Palma S."/>
            <person name="Preisinger C."/>
            <person name="Peng M."/>
            <person name="Polat A.N."/>
            <person name="Heck A.J."/>
            <person name="Mohammed S."/>
        </authorList>
    </citation>
    <scope>PHOSPHORYLATION [LARGE SCALE ANALYSIS] AT SER-66</scope>
    <scope>IDENTIFICATION BY MASS SPECTROMETRY [LARGE SCALE ANALYSIS]</scope>
    <source>
        <tissue>Erythroleukemia</tissue>
    </source>
</reference>
<reference key="13">
    <citation type="journal article" date="2014" name="J. Proteomics">
        <title>An enzyme assisted RP-RPLC approach for in-depth analysis of human liver phosphoproteome.</title>
        <authorList>
            <person name="Bian Y."/>
            <person name="Song C."/>
            <person name="Cheng K."/>
            <person name="Dong M."/>
            <person name="Wang F."/>
            <person name="Huang J."/>
            <person name="Sun D."/>
            <person name="Wang L."/>
            <person name="Ye M."/>
            <person name="Zou H."/>
        </authorList>
    </citation>
    <scope>IDENTIFICATION BY MASS SPECTROMETRY [LARGE SCALE ANALYSIS]</scope>
    <source>
        <tissue>Liver</tissue>
    </source>
</reference>
<reference key="14">
    <citation type="journal article" date="2015" name="Proteomics">
        <title>N-terminome analysis of the human mitochondrial proteome.</title>
        <authorList>
            <person name="Vaca Jacome A.S."/>
            <person name="Rabilloud T."/>
            <person name="Schaeffer-Reiss C."/>
            <person name="Rompais M."/>
            <person name="Ayoub D."/>
            <person name="Lane L."/>
            <person name="Bairoch A."/>
            <person name="Van Dorsselaer A."/>
            <person name="Carapito C."/>
        </authorList>
    </citation>
    <scope>IDENTIFICATION BY MASS SPECTROMETRY [LARGE SCALE ANALYSIS]</scope>
</reference>
<reference key="15">
    <citation type="journal article" date="2019" name="IScience">
        <title>Rewiring of the Human Mitochondrial Interactome during Neuronal Reprogramming Reveals Regulators of the Respirasome and Neurogenesis.</title>
        <authorList>
            <person name="Moutaoufik M.T."/>
            <person name="Malty R."/>
            <person name="Amin S."/>
            <person name="Zhang Q."/>
            <person name="Phanse S."/>
            <person name="Gagarinova A."/>
            <person name="Zilocchi M."/>
            <person name="Hoell L."/>
            <person name="Minic Z."/>
            <person name="Gagarinova M."/>
            <person name="Aoki H."/>
            <person name="Stockwell J."/>
            <person name="Jessulat M."/>
            <person name="Goebels F."/>
            <person name="Broderick K."/>
            <person name="Scott N.E."/>
            <person name="Vlasblom J."/>
            <person name="Musso G."/>
            <person name="Prasad B."/>
            <person name="Lamantea E."/>
            <person name="Garavaglia B."/>
            <person name="Rajput A."/>
            <person name="Murayama K."/>
            <person name="Okazaki Y."/>
            <person name="Foster L.J."/>
            <person name="Bader G.D."/>
            <person name="Cayabyab F.S."/>
            <person name="Babu M."/>
        </authorList>
    </citation>
    <scope>IDENTIFICATION BY MASS SPECTROMETRY</scope>
    <scope>INTERACTION WITH RAB5IF</scope>
</reference>
<reference key="16">
    <citation type="journal article" date="2018" name="Cell Res.">
        <title>Structure of the intact 14-subunit human cytochrome c oxidase.</title>
        <authorList>
            <person name="Zong S."/>
            <person name="Wu M."/>
            <person name="Gu J."/>
            <person name="Liu T."/>
            <person name="Guo R."/>
            <person name="Yang M."/>
        </authorList>
    </citation>
    <scope>STRUCTURE BY ELECTRON MICROSCOPY (3.60 ANGSTROMS) OF 3-81</scope>
</reference>
<gene>
    <name type="primary">NDUFA4</name>
</gene>
<feature type="chain" id="PRO_0000118821" description="Cytochrome c oxidase subunit NDUFA4">
    <location>
        <begin position="1"/>
        <end position="81"/>
    </location>
</feature>
<feature type="topological domain" description="Mitochondrial matrix" evidence="4">
    <location>
        <begin position="1"/>
        <end position="14"/>
    </location>
</feature>
<feature type="transmembrane region" description="Helical" evidence="4">
    <location>
        <begin position="15"/>
        <end position="37"/>
    </location>
</feature>
<feature type="topological domain" description="Mitochondrial intermembrane" evidence="4">
    <location>
        <begin position="38"/>
        <end position="81"/>
    </location>
</feature>
<feature type="modified residue" description="N6-acetyllysine" evidence="1">
    <location>
        <position position="10"/>
    </location>
</feature>
<feature type="modified residue" description="Phosphoserine" evidence="10">
    <location>
        <position position="66"/>
    </location>
</feature>
<organism>
    <name type="scientific">Homo sapiens</name>
    <name type="common">Human</name>
    <dbReference type="NCBI Taxonomy" id="9606"/>
    <lineage>
        <taxon>Eukaryota</taxon>
        <taxon>Metazoa</taxon>
        <taxon>Chordata</taxon>
        <taxon>Craniata</taxon>
        <taxon>Vertebrata</taxon>
        <taxon>Euteleostomi</taxon>
        <taxon>Mammalia</taxon>
        <taxon>Eutheria</taxon>
        <taxon>Euarchontoglires</taxon>
        <taxon>Primates</taxon>
        <taxon>Haplorrhini</taxon>
        <taxon>Catarrhini</taxon>
        <taxon>Hominidae</taxon>
        <taxon>Homo</taxon>
    </lineage>
</organism>
<evidence type="ECO:0000250" key="1">
    <source>
        <dbReference type="UniProtKB" id="Q62425"/>
    </source>
</evidence>
<evidence type="ECO:0000269" key="2">
    <source>
    </source>
</evidence>
<evidence type="ECO:0000269" key="3">
    <source>
    </source>
</evidence>
<evidence type="ECO:0000269" key="4">
    <source>
    </source>
</evidence>
<evidence type="ECO:0000269" key="5">
    <source>
    </source>
</evidence>
<evidence type="ECO:0000305" key="6"/>
<evidence type="ECO:0000305" key="7">
    <source>
    </source>
</evidence>
<evidence type="ECO:0000305" key="8">
    <source>
    </source>
</evidence>
<evidence type="ECO:0000305" key="9">
    <source>
    </source>
</evidence>
<evidence type="ECO:0007744" key="10">
    <source>
    </source>
</evidence>
<comment type="function">
    <text evidence="2">Component of the cytochrome c oxidase, the last enzyme in the mitochondrial electron transport chain which drives oxidative phosphorylation. The respiratory chain contains 3 multisubunit complexes succinate dehydrogenase (complex II, CII), ubiquinol-cytochrome c oxidoreductase (cytochrome b-c1 complex, complex III, CIII) and cytochrome c oxidase (complex IV, CIV), that cooperate to transfer electrons derived from NADH and succinate to molecular oxygen, creating an electrochemical gradient over the inner membrane that drives transmembrane transport and the ATP synthase. Cytochrome c oxidase is the component of the respiratory chain that catalyzes the reduction of oxygen to water. Electrons originating from reduced cytochrome c in the intermembrane space (IMS) are transferred via the dinuclear copper A center (CU(A)) of subunit 2 and heme A of subunit 1 to the active site in subunit 1, a binuclear center (BNC) formed by heme A3 and copper B (CU(B)). The BNC reduces molecular oxygen to 2 water molecules unsing 4 electrons from cytochrome c in the IMS and 4 protons from the mitochondrial matrix (PubMed:22902835). NDUFA4 is required for complex IV maintenance (PubMed:22902835).</text>
</comment>
<comment type="subunit">
    <text evidence="1 2 3 4 5 6">Component of the cytochrome c oxidase (complex IV, CIV), a multisubunit enzyme composed of 14 subunits. The complex is composed of a catalytic core of 3 subunits MT-CO1, MT-CO2 and MT-CO3, encoded in the mitochondrial DNA, and 11 supernumerary subunits COX4I1 (or COX4I2), COX5A, COX5B, COX6A1 (or COX6A2), COX6B1 (or COX6B2), COX6C, COX7A2 (or COX7A1), COX7B, COX7C, COX8A and NDUFA4, which are encoded in the nuclear genome (PubMed:22902835, PubMed:23746447, PubMed:30030519). The complex exists as a monomer or a dimer and forms supercomplexes (SCs) in the inner mitochondrial membrane with NADH-ubiquinone oxidoreductase (complex I, CI) and ubiquinol-cytochrome c oxidoreductase (cytochrome b-c1 complex, complex III, CIII), resulting in different assemblies (supercomplex SCI(1)III(2)IV(1) and megacomplex MCI(2)III(2)IV(2)) (Probable). Interacts with RAB5IF (PubMed:31536960). Interacts with FLVCR2; this interaction occurs in the absence of heme and is disrupted upon heme binding.</text>
</comment>
<comment type="interaction">
    <interactant intactId="EBI-1049381">
        <id>O00483</id>
    </interactant>
    <interactant intactId="EBI-23669343">
        <id>Q92782-2</id>
        <label>DPF1</label>
    </interactant>
    <organismsDiffer>false</organismsDiffer>
    <experiments>3</experiments>
</comment>
<comment type="subcellular location">
    <subcellularLocation>
        <location evidence="3 4">Mitochondrion inner membrane</location>
        <topology evidence="4">Single-pass membrane protein</topology>
    </subcellularLocation>
</comment>
<comment type="disease" evidence="3">
    <disease id="DI-05942">
        <name>Mitochondrial complex IV deficiency, nuclear type 21</name>
        <acronym>MC4DN21</acronym>
        <description>An autosomal recessive mitochondrial disorder with onset in infancy. MC4DN21 is characterized by congenital lactic acidosis, encephalopathy, global developmental delay, delayed speech, motor dysfunction, dystonia, and spasticity. Ataxia, peripheral neuropathy, and seizures may also occur. Patient tissues show variably decreased levels and activity of mitochondrial respiratory complex IV.</description>
        <dbReference type="MIM" id="619065"/>
    </disease>
    <text>The disease may be caused by variants affecting the gene represented in this entry.</text>
</comment>
<comment type="miscellaneous">
    <text evidence="8 9">During complex IV purifications dissociates from complex IV upon treatment with standard detergent DDM (decyl beta-D-maltoside) in high concentrations (PubMed:22902835, PubMed:23746447).</text>
</comment>
<comment type="similarity">
    <text evidence="6">Belongs to the complex IV NDUFA4 subunit family.</text>
</comment>
<comment type="caution">
    <text evidence="7">Was initially believed to be a subunit of the mitochondrial membrane respiratory chain NADH dehydrogenase (complex I).</text>
</comment>